<keyword id="KW-0067">ATP-binding</keyword>
<keyword id="KW-0315">Glutamine amidotransferase</keyword>
<keyword id="KW-0436">Ligase</keyword>
<keyword id="KW-0460">Magnesium</keyword>
<keyword id="KW-0479">Metal-binding</keyword>
<keyword id="KW-0547">Nucleotide-binding</keyword>
<keyword id="KW-0665">Pyrimidine biosynthesis</keyword>
<keyword id="KW-1185">Reference proteome</keyword>
<organism>
    <name type="scientific">Nitrobacter winogradskyi (strain ATCC 25391 / DSM 10237 / CIP 104748 / NCIMB 11846 / Nb-255)</name>
    <dbReference type="NCBI Taxonomy" id="323098"/>
    <lineage>
        <taxon>Bacteria</taxon>
        <taxon>Pseudomonadati</taxon>
        <taxon>Pseudomonadota</taxon>
        <taxon>Alphaproteobacteria</taxon>
        <taxon>Hyphomicrobiales</taxon>
        <taxon>Nitrobacteraceae</taxon>
        <taxon>Nitrobacter</taxon>
    </lineage>
</organism>
<sequence>MARYIFITGGVVSSLGKGLASAALGALLQARGYKVRLRKLDPYLNLDPGTMSPYQHGEVFVTDDGAETDLDLGHYERFTGRPATRQDNITTGRIYQDILTRERRGDYLGATIQVIPHVTNAIKAFILDGNDDHDFVLCEIGGTVGDIEGLPFFEAIRQLKNDLPRGHAIYVHLTLLPFIPSAGELKTKPTQHSVKELRSIGIQPDILLCRTDREIPAEERRKLGLFCNVRESAVIEARDADNIYAVPEVYHAAGLDDEVLAAFGIEPAAPPALKGWHDINERIRNPEGAVTIAIVGKYTGMKDAYKSLIEALSHGGIANKVKVNLDWIESEVFENEDAAPFLEHVDGILVPGGFGQRGAEGKIKAARFARERHVPYFGICFGMQMAVIEAARNLVGISDANSTEFGPTREPLVGLMTEWLRGSELEKRSKAGDLGGTMRLGAYPAMLKRGSRVSGIYGGAVEISERHRHRYEVNTAYKDRLEQHGLRFSGLSPDGVLPEIVEYQDHPWFIGVQYHPELKSRPFEPHPLFASFIQAAVVQSRLV</sequence>
<name>PYRG_NITWN</name>
<feature type="chain" id="PRO_0000266163" description="CTP synthase">
    <location>
        <begin position="1"/>
        <end position="543"/>
    </location>
</feature>
<feature type="domain" description="Glutamine amidotransferase type-1" evidence="1">
    <location>
        <begin position="291"/>
        <end position="542"/>
    </location>
</feature>
<feature type="region of interest" description="Amidoligase domain" evidence="1">
    <location>
        <begin position="1"/>
        <end position="265"/>
    </location>
</feature>
<feature type="active site" description="Nucleophile; for glutamine hydrolysis" evidence="1">
    <location>
        <position position="380"/>
    </location>
</feature>
<feature type="active site" evidence="1">
    <location>
        <position position="515"/>
    </location>
</feature>
<feature type="active site" evidence="1">
    <location>
        <position position="517"/>
    </location>
</feature>
<feature type="binding site" evidence="1">
    <location>
        <position position="13"/>
    </location>
    <ligand>
        <name>CTP</name>
        <dbReference type="ChEBI" id="CHEBI:37563"/>
        <note>allosteric inhibitor</note>
    </ligand>
</feature>
<feature type="binding site" evidence="1">
    <location>
        <position position="13"/>
    </location>
    <ligand>
        <name>UTP</name>
        <dbReference type="ChEBI" id="CHEBI:46398"/>
    </ligand>
</feature>
<feature type="binding site" evidence="1">
    <location>
        <begin position="14"/>
        <end position="19"/>
    </location>
    <ligand>
        <name>ATP</name>
        <dbReference type="ChEBI" id="CHEBI:30616"/>
    </ligand>
</feature>
<feature type="binding site" evidence="1">
    <location>
        <position position="54"/>
    </location>
    <ligand>
        <name>L-glutamine</name>
        <dbReference type="ChEBI" id="CHEBI:58359"/>
    </ligand>
</feature>
<feature type="binding site" evidence="1">
    <location>
        <position position="71"/>
    </location>
    <ligand>
        <name>ATP</name>
        <dbReference type="ChEBI" id="CHEBI:30616"/>
    </ligand>
</feature>
<feature type="binding site" evidence="1">
    <location>
        <position position="71"/>
    </location>
    <ligand>
        <name>Mg(2+)</name>
        <dbReference type="ChEBI" id="CHEBI:18420"/>
    </ligand>
</feature>
<feature type="binding site" evidence="1">
    <location>
        <position position="139"/>
    </location>
    <ligand>
        <name>Mg(2+)</name>
        <dbReference type="ChEBI" id="CHEBI:18420"/>
    </ligand>
</feature>
<feature type="binding site" evidence="1">
    <location>
        <begin position="146"/>
        <end position="148"/>
    </location>
    <ligand>
        <name>CTP</name>
        <dbReference type="ChEBI" id="CHEBI:37563"/>
        <note>allosteric inhibitor</note>
    </ligand>
</feature>
<feature type="binding site" evidence="1">
    <location>
        <begin position="186"/>
        <end position="191"/>
    </location>
    <ligand>
        <name>CTP</name>
        <dbReference type="ChEBI" id="CHEBI:37563"/>
        <note>allosteric inhibitor</note>
    </ligand>
</feature>
<feature type="binding site" evidence="1">
    <location>
        <begin position="186"/>
        <end position="191"/>
    </location>
    <ligand>
        <name>UTP</name>
        <dbReference type="ChEBI" id="CHEBI:46398"/>
    </ligand>
</feature>
<feature type="binding site" evidence="1">
    <location>
        <position position="222"/>
    </location>
    <ligand>
        <name>CTP</name>
        <dbReference type="ChEBI" id="CHEBI:37563"/>
        <note>allosteric inhibitor</note>
    </ligand>
</feature>
<feature type="binding site" evidence="1">
    <location>
        <position position="222"/>
    </location>
    <ligand>
        <name>UTP</name>
        <dbReference type="ChEBI" id="CHEBI:46398"/>
    </ligand>
</feature>
<feature type="binding site" evidence="1">
    <location>
        <begin position="238"/>
        <end position="240"/>
    </location>
    <ligand>
        <name>ATP</name>
        <dbReference type="ChEBI" id="CHEBI:30616"/>
    </ligand>
</feature>
<feature type="binding site" evidence="1">
    <location>
        <position position="353"/>
    </location>
    <ligand>
        <name>L-glutamine</name>
        <dbReference type="ChEBI" id="CHEBI:58359"/>
    </ligand>
</feature>
<feature type="binding site" evidence="1">
    <location>
        <begin position="381"/>
        <end position="384"/>
    </location>
    <ligand>
        <name>L-glutamine</name>
        <dbReference type="ChEBI" id="CHEBI:58359"/>
    </ligand>
</feature>
<feature type="binding site" evidence="1">
    <location>
        <position position="404"/>
    </location>
    <ligand>
        <name>L-glutamine</name>
        <dbReference type="ChEBI" id="CHEBI:58359"/>
    </ligand>
</feature>
<feature type="binding site" evidence="1">
    <location>
        <position position="470"/>
    </location>
    <ligand>
        <name>L-glutamine</name>
        <dbReference type="ChEBI" id="CHEBI:58359"/>
    </ligand>
</feature>
<proteinExistence type="inferred from homology"/>
<evidence type="ECO:0000255" key="1">
    <source>
        <dbReference type="HAMAP-Rule" id="MF_01227"/>
    </source>
</evidence>
<dbReference type="EC" id="6.3.4.2" evidence="1"/>
<dbReference type="EMBL" id="CP000115">
    <property type="protein sequence ID" value="ABA05093.1"/>
    <property type="molecule type" value="Genomic_DNA"/>
</dbReference>
<dbReference type="RefSeq" id="WP_011315089.1">
    <property type="nucleotide sequence ID" value="NC_007406.1"/>
</dbReference>
<dbReference type="SMR" id="Q3SRJ8"/>
<dbReference type="STRING" id="323098.Nwi_1833"/>
<dbReference type="MEROPS" id="C26.964"/>
<dbReference type="KEGG" id="nwi:Nwi_1833"/>
<dbReference type="eggNOG" id="COG0504">
    <property type="taxonomic scope" value="Bacteria"/>
</dbReference>
<dbReference type="HOGENOM" id="CLU_011675_5_0_5"/>
<dbReference type="OrthoDB" id="9801107at2"/>
<dbReference type="UniPathway" id="UPA00159">
    <property type="reaction ID" value="UER00277"/>
</dbReference>
<dbReference type="Proteomes" id="UP000002531">
    <property type="component" value="Chromosome"/>
</dbReference>
<dbReference type="GO" id="GO:0005829">
    <property type="term" value="C:cytosol"/>
    <property type="evidence" value="ECO:0007669"/>
    <property type="project" value="TreeGrafter"/>
</dbReference>
<dbReference type="GO" id="GO:0005524">
    <property type="term" value="F:ATP binding"/>
    <property type="evidence" value="ECO:0007669"/>
    <property type="project" value="UniProtKB-KW"/>
</dbReference>
<dbReference type="GO" id="GO:0003883">
    <property type="term" value="F:CTP synthase activity"/>
    <property type="evidence" value="ECO:0007669"/>
    <property type="project" value="UniProtKB-UniRule"/>
</dbReference>
<dbReference type="GO" id="GO:0004359">
    <property type="term" value="F:glutaminase activity"/>
    <property type="evidence" value="ECO:0007669"/>
    <property type="project" value="RHEA"/>
</dbReference>
<dbReference type="GO" id="GO:0042802">
    <property type="term" value="F:identical protein binding"/>
    <property type="evidence" value="ECO:0007669"/>
    <property type="project" value="TreeGrafter"/>
</dbReference>
<dbReference type="GO" id="GO:0046872">
    <property type="term" value="F:metal ion binding"/>
    <property type="evidence" value="ECO:0007669"/>
    <property type="project" value="UniProtKB-KW"/>
</dbReference>
<dbReference type="GO" id="GO:0044210">
    <property type="term" value="P:'de novo' CTP biosynthetic process"/>
    <property type="evidence" value="ECO:0007669"/>
    <property type="project" value="UniProtKB-UniRule"/>
</dbReference>
<dbReference type="GO" id="GO:0019856">
    <property type="term" value="P:pyrimidine nucleobase biosynthetic process"/>
    <property type="evidence" value="ECO:0007669"/>
    <property type="project" value="TreeGrafter"/>
</dbReference>
<dbReference type="CDD" id="cd03113">
    <property type="entry name" value="CTPS_N"/>
    <property type="match status" value="1"/>
</dbReference>
<dbReference type="CDD" id="cd01746">
    <property type="entry name" value="GATase1_CTP_Synthase"/>
    <property type="match status" value="1"/>
</dbReference>
<dbReference type="FunFam" id="3.40.50.300:FF:000009">
    <property type="entry name" value="CTP synthase"/>
    <property type="match status" value="1"/>
</dbReference>
<dbReference type="FunFam" id="3.40.50.880:FF:000002">
    <property type="entry name" value="CTP synthase"/>
    <property type="match status" value="1"/>
</dbReference>
<dbReference type="Gene3D" id="3.40.50.880">
    <property type="match status" value="1"/>
</dbReference>
<dbReference type="Gene3D" id="3.40.50.300">
    <property type="entry name" value="P-loop containing nucleotide triphosphate hydrolases"/>
    <property type="match status" value="1"/>
</dbReference>
<dbReference type="HAMAP" id="MF_01227">
    <property type="entry name" value="PyrG"/>
    <property type="match status" value="1"/>
</dbReference>
<dbReference type="InterPro" id="IPR029062">
    <property type="entry name" value="Class_I_gatase-like"/>
</dbReference>
<dbReference type="InterPro" id="IPR004468">
    <property type="entry name" value="CTP_synthase"/>
</dbReference>
<dbReference type="InterPro" id="IPR017456">
    <property type="entry name" value="CTP_synthase_N"/>
</dbReference>
<dbReference type="InterPro" id="IPR017926">
    <property type="entry name" value="GATASE"/>
</dbReference>
<dbReference type="InterPro" id="IPR033828">
    <property type="entry name" value="GATase1_CTP_Synthase"/>
</dbReference>
<dbReference type="InterPro" id="IPR027417">
    <property type="entry name" value="P-loop_NTPase"/>
</dbReference>
<dbReference type="NCBIfam" id="NF003792">
    <property type="entry name" value="PRK05380.1"/>
    <property type="match status" value="1"/>
</dbReference>
<dbReference type="NCBIfam" id="TIGR00337">
    <property type="entry name" value="PyrG"/>
    <property type="match status" value="1"/>
</dbReference>
<dbReference type="PANTHER" id="PTHR11550">
    <property type="entry name" value="CTP SYNTHASE"/>
    <property type="match status" value="1"/>
</dbReference>
<dbReference type="PANTHER" id="PTHR11550:SF0">
    <property type="entry name" value="CTP SYNTHASE-RELATED"/>
    <property type="match status" value="1"/>
</dbReference>
<dbReference type="Pfam" id="PF06418">
    <property type="entry name" value="CTP_synth_N"/>
    <property type="match status" value="1"/>
</dbReference>
<dbReference type="Pfam" id="PF00117">
    <property type="entry name" value="GATase"/>
    <property type="match status" value="1"/>
</dbReference>
<dbReference type="SUPFAM" id="SSF52317">
    <property type="entry name" value="Class I glutamine amidotransferase-like"/>
    <property type="match status" value="1"/>
</dbReference>
<dbReference type="SUPFAM" id="SSF52540">
    <property type="entry name" value="P-loop containing nucleoside triphosphate hydrolases"/>
    <property type="match status" value="1"/>
</dbReference>
<dbReference type="PROSITE" id="PS51273">
    <property type="entry name" value="GATASE_TYPE_1"/>
    <property type="match status" value="1"/>
</dbReference>
<comment type="function">
    <text evidence="1">Catalyzes the ATP-dependent amination of UTP to CTP with either L-glutamine or ammonia as the source of nitrogen. Regulates intracellular CTP levels through interactions with the four ribonucleotide triphosphates.</text>
</comment>
<comment type="catalytic activity">
    <reaction evidence="1">
        <text>UTP + L-glutamine + ATP + H2O = CTP + L-glutamate + ADP + phosphate + 2 H(+)</text>
        <dbReference type="Rhea" id="RHEA:26426"/>
        <dbReference type="ChEBI" id="CHEBI:15377"/>
        <dbReference type="ChEBI" id="CHEBI:15378"/>
        <dbReference type="ChEBI" id="CHEBI:29985"/>
        <dbReference type="ChEBI" id="CHEBI:30616"/>
        <dbReference type="ChEBI" id="CHEBI:37563"/>
        <dbReference type="ChEBI" id="CHEBI:43474"/>
        <dbReference type="ChEBI" id="CHEBI:46398"/>
        <dbReference type="ChEBI" id="CHEBI:58359"/>
        <dbReference type="ChEBI" id="CHEBI:456216"/>
        <dbReference type="EC" id="6.3.4.2"/>
    </reaction>
</comment>
<comment type="catalytic activity">
    <reaction evidence="1">
        <text>L-glutamine + H2O = L-glutamate + NH4(+)</text>
        <dbReference type="Rhea" id="RHEA:15889"/>
        <dbReference type="ChEBI" id="CHEBI:15377"/>
        <dbReference type="ChEBI" id="CHEBI:28938"/>
        <dbReference type="ChEBI" id="CHEBI:29985"/>
        <dbReference type="ChEBI" id="CHEBI:58359"/>
    </reaction>
</comment>
<comment type="catalytic activity">
    <reaction evidence="1">
        <text>UTP + NH4(+) + ATP = CTP + ADP + phosphate + 2 H(+)</text>
        <dbReference type="Rhea" id="RHEA:16597"/>
        <dbReference type="ChEBI" id="CHEBI:15378"/>
        <dbReference type="ChEBI" id="CHEBI:28938"/>
        <dbReference type="ChEBI" id="CHEBI:30616"/>
        <dbReference type="ChEBI" id="CHEBI:37563"/>
        <dbReference type="ChEBI" id="CHEBI:43474"/>
        <dbReference type="ChEBI" id="CHEBI:46398"/>
        <dbReference type="ChEBI" id="CHEBI:456216"/>
    </reaction>
</comment>
<comment type="activity regulation">
    <text evidence="1">Allosterically activated by GTP, when glutamine is the substrate; GTP has no effect on the reaction when ammonia is the substrate. The allosteric effector GTP functions by stabilizing the protein conformation that binds the tetrahedral intermediate(s) formed during glutamine hydrolysis. Inhibited by the product CTP, via allosteric rather than competitive inhibition.</text>
</comment>
<comment type="pathway">
    <text evidence="1">Pyrimidine metabolism; CTP biosynthesis via de novo pathway; CTP from UDP: step 2/2.</text>
</comment>
<comment type="subunit">
    <text evidence="1">Homotetramer.</text>
</comment>
<comment type="miscellaneous">
    <text evidence="1">CTPSs have evolved a hybrid strategy for distinguishing between UTP and CTP. The overlapping regions of the product feedback inhibitory and substrate sites recognize a common feature in both compounds, the triphosphate moiety. To differentiate isosteric substrate and product pyrimidine rings, an additional pocket far from the expected kinase/ligase catalytic site, specifically recognizes the cytosine and ribose portions of the product inhibitor.</text>
</comment>
<comment type="similarity">
    <text evidence="1">Belongs to the CTP synthase family.</text>
</comment>
<gene>
    <name evidence="1" type="primary">pyrG</name>
    <name type="ordered locus">Nwi_1833</name>
</gene>
<protein>
    <recommendedName>
        <fullName evidence="1">CTP synthase</fullName>
        <ecNumber evidence="1">6.3.4.2</ecNumber>
    </recommendedName>
    <alternativeName>
        <fullName evidence="1">Cytidine 5'-triphosphate synthase</fullName>
    </alternativeName>
    <alternativeName>
        <fullName evidence="1">Cytidine triphosphate synthetase</fullName>
        <shortName evidence="1">CTP synthetase</shortName>
        <shortName evidence="1">CTPS</shortName>
    </alternativeName>
    <alternativeName>
        <fullName evidence="1">UTP--ammonia ligase</fullName>
    </alternativeName>
</protein>
<accession>Q3SRJ8</accession>
<reference key="1">
    <citation type="journal article" date="2006" name="Appl. Environ. Microbiol.">
        <title>Genome sequence of the chemolithoautotrophic nitrite-oxidizing bacterium Nitrobacter winogradskyi Nb-255.</title>
        <authorList>
            <person name="Starkenburg S.R."/>
            <person name="Chain P.S.G."/>
            <person name="Sayavedra-Soto L.A."/>
            <person name="Hauser L."/>
            <person name="Land M.L."/>
            <person name="Larimer F.W."/>
            <person name="Malfatti S.A."/>
            <person name="Klotz M.G."/>
            <person name="Bottomley P.J."/>
            <person name="Arp D.J."/>
            <person name="Hickey W.J."/>
        </authorList>
    </citation>
    <scope>NUCLEOTIDE SEQUENCE [LARGE SCALE GENOMIC DNA]</scope>
    <source>
        <strain>ATCC 25391 / DSM 10237 / CIP 104748 / NCIMB 11846 / Nb-255</strain>
    </source>
</reference>